<name>SUB2_ASPOR</name>
<reference key="1">
    <citation type="journal article" date="2005" name="Nature">
        <title>Genome sequencing and analysis of Aspergillus oryzae.</title>
        <authorList>
            <person name="Machida M."/>
            <person name="Asai K."/>
            <person name="Sano M."/>
            <person name="Tanaka T."/>
            <person name="Kumagai T."/>
            <person name="Terai G."/>
            <person name="Kusumoto K."/>
            <person name="Arima T."/>
            <person name="Akita O."/>
            <person name="Kashiwagi Y."/>
            <person name="Abe K."/>
            <person name="Gomi K."/>
            <person name="Horiuchi H."/>
            <person name="Kitamoto K."/>
            <person name="Kobayashi T."/>
            <person name="Takeuchi M."/>
            <person name="Denning D.W."/>
            <person name="Galagan J.E."/>
            <person name="Nierman W.C."/>
            <person name="Yu J."/>
            <person name="Archer D.B."/>
            <person name="Bennett J.W."/>
            <person name="Bhatnagar D."/>
            <person name="Cleveland T.E."/>
            <person name="Fedorova N.D."/>
            <person name="Gotoh O."/>
            <person name="Horikawa H."/>
            <person name="Hosoyama A."/>
            <person name="Ichinomiya M."/>
            <person name="Igarashi R."/>
            <person name="Iwashita K."/>
            <person name="Juvvadi P.R."/>
            <person name="Kato M."/>
            <person name="Kato Y."/>
            <person name="Kin T."/>
            <person name="Kokubun A."/>
            <person name="Maeda H."/>
            <person name="Maeyama N."/>
            <person name="Maruyama J."/>
            <person name="Nagasaki H."/>
            <person name="Nakajima T."/>
            <person name="Oda K."/>
            <person name="Okada K."/>
            <person name="Paulsen I."/>
            <person name="Sakamoto K."/>
            <person name="Sawano T."/>
            <person name="Takahashi M."/>
            <person name="Takase K."/>
            <person name="Terabayashi Y."/>
            <person name="Wortman J.R."/>
            <person name="Yamada O."/>
            <person name="Yamagata Y."/>
            <person name="Anazawa H."/>
            <person name="Hata Y."/>
            <person name="Koide Y."/>
            <person name="Komori T."/>
            <person name="Koyama Y."/>
            <person name="Minetoki T."/>
            <person name="Suharnan S."/>
            <person name="Tanaka A."/>
            <person name="Isono K."/>
            <person name="Kuhara S."/>
            <person name="Ogasawara N."/>
            <person name="Kikuchi H."/>
        </authorList>
    </citation>
    <scope>NUCLEOTIDE SEQUENCE [LARGE SCALE GENOMIC DNA]</scope>
    <source>
        <strain>ATCC 42149 / RIB 40</strain>
    </source>
</reference>
<dbReference type="EC" id="3.6.4.13"/>
<dbReference type="EMBL" id="BA000053">
    <property type="protein sequence ID" value="BAE62768.1"/>
    <property type="molecule type" value="Genomic_DNA"/>
</dbReference>
<dbReference type="RefSeq" id="XP_001823901.1">
    <property type="nucleotide sequence ID" value="XM_001823849.2"/>
</dbReference>
<dbReference type="SMR" id="Q2U6P7"/>
<dbReference type="STRING" id="510516.Q2U6P7"/>
<dbReference type="EnsemblFungi" id="BAE62768">
    <property type="protein sequence ID" value="BAE62768"/>
    <property type="gene ID" value="AO090120000149"/>
</dbReference>
<dbReference type="GeneID" id="5996160"/>
<dbReference type="KEGG" id="aor:AO090120000149"/>
<dbReference type="VEuPathDB" id="FungiDB:AO090120000149"/>
<dbReference type="HOGENOM" id="CLU_003041_1_0_1"/>
<dbReference type="OMA" id="YAHVEPK"/>
<dbReference type="OrthoDB" id="32485at5052"/>
<dbReference type="Proteomes" id="UP000006564">
    <property type="component" value="Chromosome 5"/>
</dbReference>
<dbReference type="GO" id="GO:0000781">
    <property type="term" value="C:chromosome, telomeric region"/>
    <property type="evidence" value="ECO:0007669"/>
    <property type="project" value="EnsemblFungi"/>
</dbReference>
<dbReference type="GO" id="GO:0005681">
    <property type="term" value="C:spliceosomal complex"/>
    <property type="evidence" value="ECO:0007669"/>
    <property type="project" value="UniProtKB-KW"/>
</dbReference>
<dbReference type="GO" id="GO:0000346">
    <property type="term" value="C:transcription export complex"/>
    <property type="evidence" value="ECO:0007669"/>
    <property type="project" value="EnsemblFungi"/>
</dbReference>
<dbReference type="GO" id="GO:0005524">
    <property type="term" value="F:ATP binding"/>
    <property type="evidence" value="ECO:0007669"/>
    <property type="project" value="UniProtKB-KW"/>
</dbReference>
<dbReference type="GO" id="GO:0016887">
    <property type="term" value="F:ATP hydrolysis activity"/>
    <property type="evidence" value="ECO:0007669"/>
    <property type="project" value="RHEA"/>
</dbReference>
<dbReference type="GO" id="GO:0003723">
    <property type="term" value="F:RNA binding"/>
    <property type="evidence" value="ECO:0007669"/>
    <property type="project" value="UniProtKB-KW"/>
</dbReference>
<dbReference type="GO" id="GO:0003724">
    <property type="term" value="F:RNA helicase activity"/>
    <property type="evidence" value="ECO:0007669"/>
    <property type="project" value="UniProtKB-EC"/>
</dbReference>
<dbReference type="GO" id="GO:0031124">
    <property type="term" value="P:mRNA 3'-end processing"/>
    <property type="evidence" value="ECO:0007669"/>
    <property type="project" value="EnsemblFungi"/>
</dbReference>
<dbReference type="GO" id="GO:0006406">
    <property type="term" value="P:mRNA export from nucleus"/>
    <property type="evidence" value="ECO:0007669"/>
    <property type="project" value="EnsemblFungi"/>
</dbReference>
<dbReference type="GO" id="GO:0000398">
    <property type="term" value="P:mRNA splicing, via spliceosome"/>
    <property type="evidence" value="ECO:0007669"/>
    <property type="project" value="EnsemblFungi"/>
</dbReference>
<dbReference type="GO" id="GO:0031509">
    <property type="term" value="P:subtelomeric heterochromatin formation"/>
    <property type="evidence" value="ECO:0007669"/>
    <property type="project" value="EnsemblFungi"/>
</dbReference>
<dbReference type="GO" id="GO:0006368">
    <property type="term" value="P:transcription elongation by RNA polymerase II"/>
    <property type="evidence" value="ECO:0007669"/>
    <property type="project" value="EnsemblFungi"/>
</dbReference>
<dbReference type="GO" id="GO:0006283">
    <property type="term" value="P:transcription-coupled nucleotide-excision repair"/>
    <property type="evidence" value="ECO:0007669"/>
    <property type="project" value="EnsemblFungi"/>
</dbReference>
<dbReference type="CDD" id="cd17950">
    <property type="entry name" value="DEADc_DDX39"/>
    <property type="match status" value="1"/>
</dbReference>
<dbReference type="CDD" id="cd18787">
    <property type="entry name" value="SF2_C_DEAD"/>
    <property type="match status" value="1"/>
</dbReference>
<dbReference type="FunFam" id="3.40.50.300:FF:000111">
    <property type="entry name" value="DEAD-box ATP-dependent RNA helicase"/>
    <property type="match status" value="1"/>
</dbReference>
<dbReference type="FunFam" id="3.40.50.300:FF:000168">
    <property type="entry name" value="DEAD-box ATP-dependent RNA helicase 56-like"/>
    <property type="match status" value="1"/>
</dbReference>
<dbReference type="Gene3D" id="3.40.50.300">
    <property type="entry name" value="P-loop containing nucleotide triphosphate hydrolases"/>
    <property type="match status" value="2"/>
</dbReference>
<dbReference type="InterPro" id="IPR011545">
    <property type="entry name" value="DEAD/DEAH_box_helicase_dom"/>
</dbReference>
<dbReference type="InterPro" id="IPR014001">
    <property type="entry name" value="Helicase_ATP-bd"/>
</dbReference>
<dbReference type="InterPro" id="IPR001650">
    <property type="entry name" value="Helicase_C-like"/>
</dbReference>
<dbReference type="InterPro" id="IPR027417">
    <property type="entry name" value="P-loop_NTPase"/>
</dbReference>
<dbReference type="InterPro" id="IPR014014">
    <property type="entry name" value="RNA_helicase_DEAD_Q_motif"/>
</dbReference>
<dbReference type="PANTHER" id="PTHR47958">
    <property type="entry name" value="ATP-DEPENDENT RNA HELICASE DBP3"/>
    <property type="match status" value="1"/>
</dbReference>
<dbReference type="Pfam" id="PF00270">
    <property type="entry name" value="DEAD"/>
    <property type="match status" value="1"/>
</dbReference>
<dbReference type="Pfam" id="PF00271">
    <property type="entry name" value="Helicase_C"/>
    <property type="match status" value="1"/>
</dbReference>
<dbReference type="SMART" id="SM00487">
    <property type="entry name" value="DEXDc"/>
    <property type="match status" value="1"/>
</dbReference>
<dbReference type="SMART" id="SM00490">
    <property type="entry name" value="HELICc"/>
    <property type="match status" value="1"/>
</dbReference>
<dbReference type="SUPFAM" id="SSF52540">
    <property type="entry name" value="P-loop containing nucleoside triphosphate hydrolases"/>
    <property type="match status" value="1"/>
</dbReference>
<dbReference type="PROSITE" id="PS51192">
    <property type="entry name" value="HELICASE_ATP_BIND_1"/>
    <property type="match status" value="1"/>
</dbReference>
<dbReference type="PROSITE" id="PS51194">
    <property type="entry name" value="HELICASE_CTER"/>
    <property type="match status" value="1"/>
</dbReference>
<dbReference type="PROSITE" id="PS51195">
    <property type="entry name" value="Q_MOTIF"/>
    <property type="match status" value="1"/>
</dbReference>
<keyword id="KW-0067">ATP-binding</keyword>
<keyword id="KW-0347">Helicase</keyword>
<keyword id="KW-0378">Hydrolase</keyword>
<keyword id="KW-0507">mRNA processing</keyword>
<keyword id="KW-0508">mRNA splicing</keyword>
<keyword id="KW-0509">mRNA transport</keyword>
<keyword id="KW-0547">Nucleotide-binding</keyword>
<keyword id="KW-0539">Nucleus</keyword>
<keyword id="KW-1185">Reference proteome</keyword>
<keyword id="KW-0694">RNA-binding</keyword>
<keyword id="KW-0747">Spliceosome</keyword>
<keyword id="KW-0813">Transport</keyword>
<accession>Q2U6P7</accession>
<evidence type="ECO:0000250" key="1"/>
<evidence type="ECO:0000255" key="2">
    <source>
        <dbReference type="PROSITE-ProRule" id="PRU00541"/>
    </source>
</evidence>
<evidence type="ECO:0000255" key="3">
    <source>
        <dbReference type="PROSITE-ProRule" id="PRU00542"/>
    </source>
</evidence>
<evidence type="ECO:0000256" key="4">
    <source>
        <dbReference type="SAM" id="MobiDB-lite"/>
    </source>
</evidence>
<evidence type="ECO:0000305" key="5"/>
<protein>
    <recommendedName>
        <fullName>ATP-dependent RNA helicase sub2</fullName>
        <ecNumber>3.6.4.13</ecNumber>
    </recommendedName>
</protein>
<gene>
    <name type="primary">sub2</name>
    <name type="ORF">AO090120000149</name>
</gene>
<proteinExistence type="inferred from homology"/>
<feature type="chain" id="PRO_0000232261" description="ATP-dependent RNA helicase sub2">
    <location>
        <begin position="1"/>
        <end position="441"/>
    </location>
</feature>
<feature type="domain" description="Helicase ATP-binding" evidence="2">
    <location>
        <begin position="89"/>
        <end position="264"/>
    </location>
</feature>
<feature type="domain" description="Helicase C-terminal" evidence="3">
    <location>
        <begin position="292"/>
        <end position="437"/>
    </location>
</feature>
<feature type="region of interest" description="Disordered" evidence="4">
    <location>
        <begin position="23"/>
        <end position="42"/>
    </location>
</feature>
<feature type="short sequence motif" description="Q motif">
    <location>
        <begin position="58"/>
        <end position="86"/>
    </location>
</feature>
<feature type="short sequence motif" description="DECD box">
    <location>
        <begin position="211"/>
        <end position="214"/>
    </location>
</feature>
<feature type="compositionally biased region" description="Low complexity" evidence="4">
    <location>
        <begin position="23"/>
        <end position="32"/>
    </location>
</feature>
<feature type="binding site" evidence="2">
    <location>
        <begin position="102"/>
        <end position="109"/>
    </location>
    <ligand>
        <name>ATP</name>
        <dbReference type="ChEBI" id="CHEBI:30616"/>
    </ligand>
</feature>
<comment type="function">
    <text evidence="1">ATP-binding RNA helicase involved in transcription elongation and required for the export of mRNA out of the nucleus. SUB2 also plays a role in pre-mRNA splicing and spliceosome assembly. May be involved in rDNA and telomeric silencing, and maintenance of genome integrity (By similarity).</text>
</comment>
<comment type="catalytic activity">
    <reaction>
        <text>ATP + H2O = ADP + phosphate + H(+)</text>
        <dbReference type="Rhea" id="RHEA:13065"/>
        <dbReference type="ChEBI" id="CHEBI:15377"/>
        <dbReference type="ChEBI" id="CHEBI:15378"/>
        <dbReference type="ChEBI" id="CHEBI:30616"/>
        <dbReference type="ChEBI" id="CHEBI:43474"/>
        <dbReference type="ChEBI" id="CHEBI:456216"/>
        <dbReference type="EC" id="3.6.4.13"/>
    </reaction>
</comment>
<comment type="subcellular location">
    <subcellularLocation>
        <location evidence="1">Nucleus</location>
    </subcellularLocation>
</comment>
<comment type="domain">
    <text>The Q motif is unique to and characteristic of the DEAD box family of RNA helicases and controls ATP binding and hydrolysis.</text>
</comment>
<comment type="similarity">
    <text evidence="5">Belongs to the DEAD box helicase family. DECD subfamily.</text>
</comment>
<organism>
    <name type="scientific">Aspergillus oryzae (strain ATCC 42149 / RIB 40)</name>
    <name type="common">Yellow koji mold</name>
    <dbReference type="NCBI Taxonomy" id="510516"/>
    <lineage>
        <taxon>Eukaryota</taxon>
        <taxon>Fungi</taxon>
        <taxon>Dikarya</taxon>
        <taxon>Ascomycota</taxon>
        <taxon>Pezizomycotina</taxon>
        <taxon>Eurotiomycetes</taxon>
        <taxon>Eurotiomycetidae</taxon>
        <taxon>Eurotiales</taxon>
        <taxon>Aspergillaceae</taxon>
        <taxon>Aspergillus</taxon>
        <taxon>Aspergillus subgen. Circumdati</taxon>
    </lineage>
</organism>
<sequence length="441" mass="49499">MSHEEDLIDYSDEELQTTDAAATTAAPAANGDAAKKGDLTVSGGRPDKKGSYVGIHSTGFRDFLLKGELLRAITDCGFEHPSEVQQVCIPTAILNVDVLCQAKSGLGKTAVFVLTTLHQLEPVPGECSVLVMCHTRELAYQIKNEYARFSKYLPDVKTAVFYGGTPIQKDVEVLSNKESYPNIVVGTPGRLNALVRDKKLSLRNVKAFVLDECDKMLDQIDMRRDVQEIFRATPADKQVMMFSATLSQEIRPVCKKFMRNPLEVYVDDDTKLTLHGLQQYYIKLSEAEKNRKLNELLDSLEFNQVIIFVKSTLRANELDKLLRECNFPSIAVHSGVSQEERIKRYKEFKEFNKRICVATDVFGRGIDIERINLAINYDLPADADSYLHRVGRAGRFGTKGLSISFVSNEEDEKVLKDIEKRFEVALPEYPEGGVDSSTYMA</sequence>